<gene>
    <name type="ORF">ISCW020559</name>
</gene>
<comment type="function">
    <text evidence="1">Allows the formation of correctly charged Gln-tRNA(Gln) through the transamidation of misacylated Glu-tRNA(Gln) in the mitochondria. The reaction takes place in the presence of glutamine and ATP through an activated gamma-phospho-Glu-tRNA(Gln).</text>
</comment>
<comment type="catalytic activity">
    <reaction evidence="1">
        <text>L-glutamyl-tRNA(Gln) + L-glutamine + ATP + H2O = L-glutaminyl-tRNA(Gln) + L-glutamate + ADP + phosphate + H(+)</text>
        <dbReference type="Rhea" id="RHEA:17521"/>
        <dbReference type="Rhea" id="RHEA-COMP:9681"/>
        <dbReference type="Rhea" id="RHEA-COMP:9684"/>
        <dbReference type="ChEBI" id="CHEBI:15377"/>
        <dbReference type="ChEBI" id="CHEBI:15378"/>
        <dbReference type="ChEBI" id="CHEBI:29985"/>
        <dbReference type="ChEBI" id="CHEBI:30616"/>
        <dbReference type="ChEBI" id="CHEBI:43474"/>
        <dbReference type="ChEBI" id="CHEBI:58359"/>
        <dbReference type="ChEBI" id="CHEBI:78520"/>
        <dbReference type="ChEBI" id="CHEBI:78521"/>
        <dbReference type="ChEBI" id="CHEBI:456216"/>
    </reaction>
</comment>
<comment type="subunit">
    <text evidence="1">Subunit of the heterotrimeric GatCAB amidotransferase (AdT) complex, composed of A, B and C subunits.</text>
</comment>
<comment type="subcellular location">
    <subcellularLocation>
        <location evidence="1">Mitochondrion</location>
    </subcellularLocation>
</comment>
<comment type="similarity">
    <text evidence="1">Belongs to the GatC family.</text>
</comment>
<protein>
    <recommendedName>
        <fullName evidence="1">Glutamyl-tRNA(Gln) amidotransferase subunit C, mitochondrial</fullName>
        <shortName evidence="1">Glu-AdT subunit C</shortName>
        <ecNumber evidence="1">6.3.5.-</ecNumber>
    </recommendedName>
</protein>
<reference key="1">
    <citation type="submission" date="2008-03" db="EMBL/GenBank/DDBJ databases">
        <title>Annotation of Ixodes scapularis.</title>
        <authorList>
            <consortium name="Ixodes scapularis Genome Project Consortium"/>
            <person name="Caler E."/>
            <person name="Hannick L.I."/>
            <person name="Bidwell S."/>
            <person name="Joardar V."/>
            <person name="Thiagarajan M."/>
            <person name="Amedeo P."/>
            <person name="Galinsky K.J."/>
            <person name="Schobel S."/>
            <person name="Inman J."/>
            <person name="Hostetler J."/>
            <person name="Miller J."/>
            <person name="Hammond M."/>
            <person name="Megy K."/>
            <person name="Lawson D."/>
            <person name="Kodira C."/>
            <person name="Sutton G."/>
            <person name="Meyer J."/>
            <person name="Hill C.A."/>
            <person name="Birren B."/>
            <person name="Nene V."/>
            <person name="Collins F."/>
            <person name="Alarcon-Chaidez F."/>
            <person name="Wikel S."/>
            <person name="Strausberg R."/>
        </authorList>
    </citation>
    <scope>NUCLEOTIDE SEQUENCE [LARGE SCALE GENOMIC DNA]</scope>
    <source>
        <strain>Wikel</strain>
    </source>
</reference>
<organism>
    <name type="scientific">Ixodes scapularis</name>
    <name type="common">Black-legged tick</name>
    <name type="synonym">Deer tick</name>
    <dbReference type="NCBI Taxonomy" id="6945"/>
    <lineage>
        <taxon>Eukaryota</taxon>
        <taxon>Metazoa</taxon>
        <taxon>Ecdysozoa</taxon>
        <taxon>Arthropoda</taxon>
        <taxon>Chelicerata</taxon>
        <taxon>Arachnida</taxon>
        <taxon>Acari</taxon>
        <taxon>Parasitiformes</taxon>
        <taxon>Ixodida</taxon>
        <taxon>Ixodoidea</taxon>
        <taxon>Ixodidae</taxon>
        <taxon>Ixodinae</taxon>
        <taxon>Ixodes</taxon>
    </lineage>
</organism>
<evidence type="ECO:0000255" key="1">
    <source>
        <dbReference type="HAMAP-Rule" id="MF_03149"/>
    </source>
</evidence>
<name>GATC_IXOSC</name>
<accession>B7PZ18</accession>
<feature type="transit peptide" description="Mitochondrion" evidence="1">
    <location>
        <begin position="1"/>
        <end position="17"/>
    </location>
</feature>
<feature type="chain" id="PRO_0000413312" description="Glutamyl-tRNA(Gln) amidotransferase subunit C, mitochondrial">
    <location>
        <begin position="18"/>
        <end position="144"/>
    </location>
</feature>
<keyword id="KW-0067">ATP-binding</keyword>
<keyword id="KW-0436">Ligase</keyword>
<keyword id="KW-0496">Mitochondrion</keyword>
<keyword id="KW-0547">Nucleotide-binding</keyword>
<keyword id="KW-0648">Protein biosynthesis</keyword>
<keyword id="KW-1185">Reference proteome</keyword>
<keyword id="KW-0809">Transit peptide</keyword>
<sequence>MFRRSVSFVRSHVLRSFSSQPVVPVTPIVKNPASQGAGTIKLEQSTVELLERLSLVDFSNAEAVSRLEEAVKFASVIMNVDTTGVRPMVTPLEDTVLRLRDDVAEKCSSEDVLKNAAVIEEDYFVAPPGNIPLEPKANYGLGNS</sequence>
<dbReference type="EC" id="6.3.5.-" evidence="1"/>
<dbReference type="EMBL" id="DS823433">
    <property type="protein sequence ID" value="EEC11840.1"/>
    <property type="molecule type" value="Genomic_DNA"/>
</dbReference>
<dbReference type="RefSeq" id="XP_002404456.1">
    <property type="nucleotide sequence ID" value="XM_002404412.1"/>
</dbReference>
<dbReference type="SMR" id="B7PZ18"/>
<dbReference type="FunCoup" id="B7PZ18">
    <property type="interactions" value="804"/>
</dbReference>
<dbReference type="STRING" id="6945.B7PZ18"/>
<dbReference type="PaxDb" id="6945-B7PZ18"/>
<dbReference type="EnsemblMetazoa" id="ISCW020559-RA">
    <property type="protein sequence ID" value="ISCW020559-PA"/>
    <property type="gene ID" value="ISCW020559"/>
</dbReference>
<dbReference type="EnsemblMetazoa" id="XM_040216156.3">
    <property type="protein sequence ID" value="XP_040072090.2"/>
    <property type="gene ID" value="LOC120844387"/>
</dbReference>
<dbReference type="VEuPathDB" id="VectorBase:ISCI020559"/>
<dbReference type="VEuPathDB" id="VectorBase:ISCP_003298"/>
<dbReference type="VEuPathDB" id="VectorBase:ISCW020559"/>
<dbReference type="HOGENOM" id="CLU_105899_0_0_1"/>
<dbReference type="InParanoid" id="B7PZ18"/>
<dbReference type="OMA" id="RCAKRTD"/>
<dbReference type="OrthoDB" id="5394539at2759"/>
<dbReference type="PhylomeDB" id="B7PZ18"/>
<dbReference type="Proteomes" id="UP000001555">
    <property type="component" value="Unassembled WGS sequence"/>
</dbReference>
<dbReference type="GO" id="GO:0030956">
    <property type="term" value="C:glutamyl-tRNA(Gln) amidotransferase complex"/>
    <property type="evidence" value="ECO:0000318"/>
    <property type="project" value="GO_Central"/>
</dbReference>
<dbReference type="GO" id="GO:0005739">
    <property type="term" value="C:mitochondrion"/>
    <property type="evidence" value="ECO:0000318"/>
    <property type="project" value="GO_Central"/>
</dbReference>
<dbReference type="GO" id="GO:0005524">
    <property type="term" value="F:ATP binding"/>
    <property type="evidence" value="ECO:0007669"/>
    <property type="project" value="UniProtKB-KW"/>
</dbReference>
<dbReference type="GO" id="GO:0050567">
    <property type="term" value="F:glutaminyl-tRNA synthase (glutamine-hydrolyzing) activity"/>
    <property type="evidence" value="ECO:0007669"/>
    <property type="project" value="UniProtKB-UniRule"/>
</dbReference>
<dbReference type="GO" id="GO:0070681">
    <property type="term" value="P:glutaminyl-tRNAGln biosynthesis via transamidation"/>
    <property type="evidence" value="ECO:0000318"/>
    <property type="project" value="GO_Central"/>
</dbReference>
<dbReference type="GO" id="GO:0032543">
    <property type="term" value="P:mitochondrial translation"/>
    <property type="evidence" value="ECO:0000318"/>
    <property type="project" value="GO_Central"/>
</dbReference>
<dbReference type="GO" id="GO:0006450">
    <property type="term" value="P:regulation of translational fidelity"/>
    <property type="evidence" value="ECO:0007669"/>
    <property type="project" value="InterPro"/>
</dbReference>
<dbReference type="HAMAP" id="MF_00122">
    <property type="entry name" value="GatC"/>
    <property type="match status" value="1"/>
</dbReference>
<dbReference type="InterPro" id="IPR036113">
    <property type="entry name" value="Asp/Glu-ADT_sf_sub_c"/>
</dbReference>
<dbReference type="InterPro" id="IPR003837">
    <property type="entry name" value="GatC"/>
</dbReference>
<dbReference type="NCBIfam" id="TIGR00135">
    <property type="entry name" value="gatC"/>
    <property type="match status" value="1"/>
</dbReference>
<dbReference type="PANTHER" id="PTHR15004">
    <property type="entry name" value="GLUTAMYL-TRNA(GLN) AMIDOTRANSFERASE SUBUNIT C, MITOCHONDRIAL"/>
    <property type="match status" value="1"/>
</dbReference>
<dbReference type="PANTHER" id="PTHR15004:SF0">
    <property type="entry name" value="GLUTAMYL-TRNA(GLN) AMIDOTRANSFERASE SUBUNIT C, MITOCHONDRIAL"/>
    <property type="match status" value="1"/>
</dbReference>
<dbReference type="Pfam" id="PF02686">
    <property type="entry name" value="GatC"/>
    <property type="match status" value="1"/>
</dbReference>
<dbReference type="SUPFAM" id="SSF141000">
    <property type="entry name" value="Glu-tRNAGln amidotransferase C subunit"/>
    <property type="match status" value="1"/>
</dbReference>
<proteinExistence type="inferred from homology"/>